<name>TVB51_HUMAN</name>
<accession>A0A578</accession>
<feature type="signal peptide" evidence="1">
    <location>
        <begin position="1"/>
        <end position="21"/>
    </location>
</feature>
<feature type="chain" id="PRO_5010490472" description="T cell receptor beta variable 5-1" evidence="1">
    <location>
        <begin position="22"/>
        <end position="114"/>
    </location>
</feature>
<feature type="domain" description="Ig-like" evidence="2">
    <location>
        <begin position="22"/>
        <end position="114" status="greater than"/>
    </location>
</feature>
<feature type="glycosylation site" description="N-linked (GlcNAc...) asparagine" evidence="1">
    <location>
        <position position="96"/>
    </location>
</feature>
<feature type="disulfide bond" evidence="2 3 12 13">
    <location>
        <begin position="42"/>
        <end position="110"/>
    </location>
</feature>
<feature type="non-terminal residue">
    <location>
        <position position="114"/>
    </location>
</feature>
<feature type="strand" evidence="15">
    <location>
        <begin position="24"/>
        <end position="26"/>
    </location>
</feature>
<feature type="strand" evidence="15">
    <location>
        <begin position="28"/>
        <end position="33"/>
    </location>
</feature>
<feature type="strand" evidence="15">
    <location>
        <begin position="38"/>
        <end position="43"/>
    </location>
</feature>
<feature type="strand" evidence="15">
    <location>
        <begin position="50"/>
        <end position="56"/>
    </location>
</feature>
<feature type="strand" evidence="15">
    <location>
        <begin position="58"/>
        <end position="60"/>
    </location>
</feature>
<feature type="strand" evidence="15">
    <location>
        <begin position="62"/>
        <end position="69"/>
    </location>
</feature>
<feature type="strand" evidence="15">
    <location>
        <begin position="72"/>
        <end position="76"/>
    </location>
</feature>
<feature type="strand" evidence="15">
    <location>
        <begin position="83"/>
        <end position="87"/>
    </location>
</feature>
<feature type="strand" evidence="14">
    <location>
        <begin position="89"/>
        <end position="91"/>
    </location>
</feature>
<feature type="strand" evidence="15">
    <location>
        <begin position="93"/>
        <end position="99"/>
    </location>
</feature>
<feature type="helix" evidence="15">
    <location>
        <begin position="102"/>
        <end position="104"/>
    </location>
</feature>
<feature type="strand" evidence="15">
    <location>
        <begin position="106"/>
        <end position="113"/>
    </location>
</feature>
<reference key="1">
    <citation type="journal article" date="1996" name="Science">
        <title>The complete 685-kilobase DNA sequence of the human beta T cell receptor locus.</title>
        <authorList>
            <person name="Rowen L."/>
            <person name="Koop B.F."/>
            <person name="Hood L."/>
        </authorList>
    </citation>
    <scope>NUCLEOTIDE SEQUENCE [GENOMIC DNA] (IMGT ALLELE TRBV5-1*01)</scope>
</reference>
<reference key="2">
    <citation type="journal article" date="2003" name="Nature">
        <title>The DNA sequence of human chromosome 7.</title>
        <authorList>
            <person name="Hillier L.W."/>
            <person name="Fulton R.S."/>
            <person name="Fulton L.A."/>
            <person name="Graves T.A."/>
            <person name="Pepin K.H."/>
            <person name="Wagner-McPherson C."/>
            <person name="Layman D."/>
            <person name="Maas J."/>
            <person name="Jaeger S."/>
            <person name="Walker R."/>
            <person name="Wylie K."/>
            <person name="Sekhon M."/>
            <person name="Becker M.C."/>
            <person name="O'Laughlin M.D."/>
            <person name="Schaller M.E."/>
            <person name="Fewell G.A."/>
            <person name="Delehaunty K.D."/>
            <person name="Miner T.L."/>
            <person name="Nash W.E."/>
            <person name="Cordes M."/>
            <person name="Du H."/>
            <person name="Sun H."/>
            <person name="Edwards J."/>
            <person name="Bradshaw-Cordum H."/>
            <person name="Ali J."/>
            <person name="Andrews S."/>
            <person name="Isak A."/>
            <person name="Vanbrunt A."/>
            <person name="Nguyen C."/>
            <person name="Du F."/>
            <person name="Lamar B."/>
            <person name="Courtney L."/>
            <person name="Kalicki J."/>
            <person name="Ozersky P."/>
            <person name="Bielicki L."/>
            <person name="Scott K."/>
            <person name="Holmes A."/>
            <person name="Harkins R."/>
            <person name="Harris A."/>
            <person name="Strong C.M."/>
            <person name="Hou S."/>
            <person name="Tomlinson C."/>
            <person name="Dauphin-Kohlberg S."/>
            <person name="Kozlowicz-Reilly A."/>
            <person name="Leonard S."/>
            <person name="Rohlfing T."/>
            <person name="Rock S.M."/>
            <person name="Tin-Wollam A.-M."/>
            <person name="Abbott A."/>
            <person name="Minx P."/>
            <person name="Maupin R."/>
            <person name="Strowmatt C."/>
            <person name="Latreille P."/>
            <person name="Miller N."/>
            <person name="Johnson D."/>
            <person name="Murray J."/>
            <person name="Woessner J.P."/>
            <person name="Wendl M.C."/>
            <person name="Yang S.-P."/>
            <person name="Schultz B.R."/>
            <person name="Wallis J.W."/>
            <person name="Spieth J."/>
            <person name="Bieri T.A."/>
            <person name="Nelson J.O."/>
            <person name="Berkowicz N."/>
            <person name="Wohldmann P.E."/>
            <person name="Cook L.L."/>
            <person name="Hickenbotham M.T."/>
            <person name="Eldred J."/>
            <person name="Williams D."/>
            <person name="Bedell J.A."/>
            <person name="Mardis E.R."/>
            <person name="Clifton S.W."/>
            <person name="Chissoe S.L."/>
            <person name="Marra M.A."/>
            <person name="Raymond C."/>
            <person name="Haugen E."/>
            <person name="Gillett W."/>
            <person name="Zhou Y."/>
            <person name="James R."/>
            <person name="Phelps K."/>
            <person name="Iadanoto S."/>
            <person name="Bubb K."/>
            <person name="Simms E."/>
            <person name="Levy R."/>
            <person name="Clendenning J."/>
            <person name="Kaul R."/>
            <person name="Kent W.J."/>
            <person name="Furey T.S."/>
            <person name="Baertsch R.A."/>
            <person name="Brent M.R."/>
            <person name="Keibler E."/>
            <person name="Flicek P."/>
            <person name="Bork P."/>
            <person name="Suyama M."/>
            <person name="Bailey J.A."/>
            <person name="Portnoy M.E."/>
            <person name="Torrents D."/>
            <person name="Chinwalla A.T."/>
            <person name="Gish W.R."/>
            <person name="Eddy S.R."/>
            <person name="McPherson J.D."/>
            <person name="Olson M.V."/>
            <person name="Eichler E.E."/>
            <person name="Green E.D."/>
            <person name="Waterston R.H."/>
            <person name="Wilson R.K."/>
        </authorList>
    </citation>
    <scope>NUCLEOTIDE SEQUENCE [LARGE SCALE GENOMIC DNA] (IMGT ALLELE TRBV5-1*01)</scope>
</reference>
<reference key="3">
    <citation type="book" date="2001" name="The T Cell Receptor FactsBook.">
        <title>The T Cell Receptor FactsBook.</title>
        <editorList>
            <person name="Lefranc M.P."/>
            <person name="Lefranc G."/>
        </editorList>
        <authorList>
            <person name="Lefranc M.P."/>
            <person name="Lefranc G."/>
        </authorList>
    </citation>
    <scope>NOMENCLATURE</scope>
</reference>
<reference key="4">
    <citation type="journal article" date="2004" name="Nat. Rev. Immunol.">
        <title>The many important facets of T-cell repertoire diversity.</title>
        <authorList>
            <person name="Nikolich-Zugich J."/>
            <person name="Slifka M.K."/>
            <person name="Messaoudi I."/>
        </authorList>
    </citation>
    <scope>REVIEW ON T CELL REPERTOIRE DIVERSITY</scope>
</reference>
<reference key="5">
    <citation type="journal article" date="2010" name="Cold Spring Harb. Perspect. Biol.">
        <title>Structural biology of the T-cell receptor: insights into receptor assembly, ligand recognition, and initiation of signaling.</title>
        <authorList>
            <person name="Wucherpfennig K.W."/>
            <person name="Gagnon E."/>
            <person name="Call M.J."/>
            <person name="Huseby E.S."/>
            <person name="Call M.E."/>
        </authorList>
    </citation>
    <scope>REVIEW ON T CELL RECEPTOR-CD3 COMPLEX ASSEMBLY</scope>
    <scope>SUBCELLULAR LOCATION</scope>
</reference>
<reference key="6">
    <citation type="journal article" date="2013" name="Nat. Rev. Immunol.">
        <title>T cell receptor signalling networks: branched, diversified and bounded.</title>
        <authorList>
            <person name="Brownlie R.J."/>
            <person name="Zamoyska R."/>
        </authorList>
    </citation>
    <scope>REVIEW ON T CELL RECEPTOR SIGNALING</scope>
</reference>
<reference key="7">
    <citation type="journal article" date="2014" name="Front. Immunol.">
        <title>Immunoglobulin and T Cell Receptor Genes: IMGT((R)) and the Birth and Rise of Immunoinformatics.</title>
        <authorList>
            <person name="Lefranc M.P."/>
        </authorList>
    </citation>
    <scope>NOMENCLATURE</scope>
</reference>
<reference key="8">
    <citation type="journal article" date="2015" name="Annu. Rev. Immunol.">
        <title>T cell antigen receptor recognition of antigen-presenting molecules.</title>
        <authorList>
            <person name="Rossjohn J."/>
            <person name="Gras S."/>
            <person name="Miles J.J."/>
            <person name="Turner S.J."/>
            <person name="Godfrey D.I."/>
            <person name="McCluskey J."/>
        </authorList>
    </citation>
    <scope>REVIEW ON FUNCTION</scope>
</reference>
<reference evidence="12 13" key="9">
    <citation type="journal article" date="2016" name="Sci. Rep.">
        <title>Direct molecular mimicry enables off-target cardiovascular toxicity by an enhanced affinity TCR designed for cancer immunotherapy.</title>
        <authorList>
            <person name="Raman M.C."/>
            <person name="Rizkallah P.J."/>
            <person name="Simmons R."/>
            <person name="Donnellan Z."/>
            <person name="Dukes J."/>
            <person name="Bossi G."/>
            <person name="Le Provost G.S."/>
            <person name="Todorov P."/>
            <person name="Baston E."/>
            <person name="Hickman E."/>
            <person name="Mahon T."/>
            <person name="Hassan N."/>
            <person name="Vuidepot A."/>
            <person name="Sami M."/>
            <person name="Cole D.K."/>
            <person name="Jakobsen B.K."/>
        </authorList>
    </citation>
    <scope>X-RAY CRYSTALLOGRAPHY (2.40 ANGSTROMS) OF 21-113</scope>
    <scope>DISULFIDE BONDS</scope>
</reference>
<keyword id="KW-0002">3D-structure</keyword>
<keyword id="KW-1064">Adaptive immunity</keyword>
<keyword id="KW-1003">Cell membrane</keyword>
<keyword id="KW-1015">Disulfide bond</keyword>
<keyword id="KW-0325">Glycoprotein</keyword>
<keyword id="KW-0391">Immunity</keyword>
<keyword id="KW-0393">Immunoglobulin domain</keyword>
<keyword id="KW-0472">Membrane</keyword>
<keyword id="KW-0675">Receptor</keyword>
<keyword id="KW-1185">Reference proteome</keyword>
<keyword id="KW-0732">Signal</keyword>
<keyword id="KW-1279">T cell receptor</keyword>
<organism>
    <name type="scientific">Homo sapiens</name>
    <name type="common">Human</name>
    <dbReference type="NCBI Taxonomy" id="9606"/>
    <lineage>
        <taxon>Eukaryota</taxon>
        <taxon>Metazoa</taxon>
        <taxon>Chordata</taxon>
        <taxon>Craniata</taxon>
        <taxon>Vertebrata</taxon>
        <taxon>Euteleostomi</taxon>
        <taxon>Mammalia</taxon>
        <taxon>Eutheria</taxon>
        <taxon>Euarchontoglires</taxon>
        <taxon>Primates</taxon>
        <taxon>Haplorrhini</taxon>
        <taxon>Catarrhini</taxon>
        <taxon>Hominidae</taxon>
        <taxon>Homo</taxon>
    </lineage>
</organism>
<dbReference type="EMBL" id="L36092">
    <property type="protein sequence ID" value="AAC80192.1"/>
    <property type="molecule type" value="Genomic_DNA"/>
</dbReference>
<dbReference type="EMBL" id="AC231381">
    <property type="status" value="NOT_ANNOTATED_CDS"/>
    <property type="molecule type" value="Genomic_DNA"/>
</dbReference>
<dbReference type="EMBL" id="AC245088">
    <property type="status" value="NOT_ANNOTATED_CDS"/>
    <property type="molecule type" value="Genomic_DNA"/>
</dbReference>
<dbReference type="PDB" id="5BRZ">
    <property type="method" value="X-ray"/>
    <property type="resolution" value="2.62 A"/>
    <property type="chains" value="E=21-113"/>
</dbReference>
<dbReference type="PDB" id="5BS0">
    <property type="method" value="X-ray"/>
    <property type="resolution" value="2.40 A"/>
    <property type="chains" value="E=21-113"/>
</dbReference>
<dbReference type="PDBsum" id="5BRZ"/>
<dbReference type="PDBsum" id="5BS0"/>
<dbReference type="SMR" id="A0A578"/>
<dbReference type="FunCoup" id="A0A578">
    <property type="interactions" value="474"/>
</dbReference>
<dbReference type="IMGT_GENE-DB" id="TRBV5-1"/>
<dbReference type="GlyCosmos" id="A0A578">
    <property type="glycosylation" value="1 site, No reported glycans"/>
</dbReference>
<dbReference type="GlyGen" id="A0A578">
    <property type="glycosylation" value="1 site"/>
</dbReference>
<dbReference type="BioMuta" id="TRBV5-1"/>
<dbReference type="Ensembl" id="ENST00000390381.3">
    <property type="protein sequence ID" value="ENSP00000374904.3"/>
    <property type="gene ID" value="ENSG00000211734.3"/>
</dbReference>
<dbReference type="Ensembl" id="ENST00000633384.1">
    <property type="protein sequence ID" value="ENSP00000488308.1"/>
    <property type="gene ID" value="ENSG00000282803.1"/>
</dbReference>
<dbReference type="UCSC" id="uc033ajs.2">
    <property type="organism name" value="human"/>
</dbReference>
<dbReference type="AGR" id="HGNC:12218"/>
<dbReference type="GeneCards" id="TRBV5-1"/>
<dbReference type="HGNC" id="HGNC:12218">
    <property type="gene designation" value="TRBV5-1"/>
</dbReference>
<dbReference type="HPA" id="ENSG00000211734">
    <property type="expression patterns" value="Tissue enriched (lymphoid)"/>
</dbReference>
<dbReference type="neXtProt" id="NX_A0A578"/>
<dbReference type="VEuPathDB" id="HostDB:ENSG00000211734"/>
<dbReference type="GeneTree" id="ENSGT00940000154270"/>
<dbReference type="HOGENOM" id="CLU_077975_9_4_1"/>
<dbReference type="InParanoid" id="A0A578"/>
<dbReference type="OMA" id="CTNLPGP"/>
<dbReference type="OrthoDB" id="9803478at2759"/>
<dbReference type="PAN-GO" id="A0A578">
    <property type="GO annotations" value="2 GO annotations based on evolutionary models"/>
</dbReference>
<dbReference type="PhylomeDB" id="A0A578"/>
<dbReference type="SignaLink" id="A0A578"/>
<dbReference type="ChiTaRS" id="TRBV5-1">
    <property type="organism name" value="human"/>
</dbReference>
<dbReference type="Pharos" id="A0A578">
    <property type="development level" value="Tdark"/>
</dbReference>
<dbReference type="PRO" id="PR:A0A578"/>
<dbReference type="Proteomes" id="UP000005640">
    <property type="component" value="Chromosome 7"/>
</dbReference>
<dbReference type="RNAct" id="A0A578">
    <property type="molecule type" value="protein"/>
</dbReference>
<dbReference type="Bgee" id="ENSG00000211734">
    <property type="expression patterns" value="Expressed in lymph node and 81 other cell types or tissues"/>
</dbReference>
<dbReference type="GO" id="GO:0005886">
    <property type="term" value="C:plasma membrane"/>
    <property type="evidence" value="ECO:0000318"/>
    <property type="project" value="GO_Central"/>
</dbReference>
<dbReference type="GO" id="GO:0042101">
    <property type="term" value="C:T cell receptor complex"/>
    <property type="evidence" value="ECO:0007669"/>
    <property type="project" value="UniProtKB-KW"/>
</dbReference>
<dbReference type="GO" id="GO:0002250">
    <property type="term" value="P:adaptive immune response"/>
    <property type="evidence" value="ECO:0007669"/>
    <property type="project" value="UniProtKB-KW"/>
</dbReference>
<dbReference type="GO" id="GO:0007166">
    <property type="term" value="P:cell surface receptor signaling pathway"/>
    <property type="evidence" value="ECO:0000318"/>
    <property type="project" value="GO_Central"/>
</dbReference>
<dbReference type="Gene3D" id="2.60.40.10">
    <property type="entry name" value="Immunoglobulins"/>
    <property type="match status" value="1"/>
</dbReference>
<dbReference type="InterPro" id="IPR007110">
    <property type="entry name" value="Ig-like_dom"/>
</dbReference>
<dbReference type="InterPro" id="IPR036179">
    <property type="entry name" value="Ig-like_dom_sf"/>
</dbReference>
<dbReference type="InterPro" id="IPR013783">
    <property type="entry name" value="Ig-like_fold"/>
</dbReference>
<dbReference type="InterPro" id="IPR013106">
    <property type="entry name" value="Ig_V-set"/>
</dbReference>
<dbReference type="InterPro" id="IPR050413">
    <property type="entry name" value="TCR_beta_variable"/>
</dbReference>
<dbReference type="PANTHER" id="PTHR23268:SF106">
    <property type="entry name" value="T CELL RECEPTOR BETA VARIABLE 5-1"/>
    <property type="match status" value="1"/>
</dbReference>
<dbReference type="PANTHER" id="PTHR23268">
    <property type="entry name" value="T-CELL RECEPTOR BETA CHAIN"/>
    <property type="match status" value="1"/>
</dbReference>
<dbReference type="Pfam" id="PF07686">
    <property type="entry name" value="V-set"/>
    <property type="match status" value="1"/>
</dbReference>
<dbReference type="SMART" id="SM00406">
    <property type="entry name" value="IGv"/>
    <property type="match status" value="1"/>
</dbReference>
<dbReference type="SUPFAM" id="SSF48726">
    <property type="entry name" value="Immunoglobulin"/>
    <property type="match status" value="1"/>
</dbReference>
<dbReference type="PROSITE" id="PS50835">
    <property type="entry name" value="IG_LIKE"/>
    <property type="match status" value="1"/>
</dbReference>
<sequence length="114" mass="12600">MGSRLLCWVLLCLLGAGPVKAGVTQTPRYLIKTRGQQVTLSCSPISGHRSVSWYQQTPGQGLQFLFEYFSETQRNKGNFPGRFSGRQFSNSRSEMNVSTLELGDSALYLCASSL</sequence>
<comment type="function">
    <text evidence="4 6 7 8">V region of the variable domain of T cell receptor (TR) beta chain that participates in the antigen recognition (PubMed:24600447). Alpha-beta T cell receptors are antigen specific receptors which are essential to the immune response and are present on the cell surface of T lymphocytes. Recognize peptide-major histocompatibility (MH) (pMH) complexes that are displayed by antigen presenting cells (APC), a prerequisite for efficient T cell adaptive immunity against pathogens (PubMed:25493333). Binding of alpha-beta TR to pMH complex initiates TR-CD3 clustering on the cell surface and intracellular activation of LCK that phosphorylates the ITAM motifs of CD3G, CD3D, CD3E and CD247 enabling the recruitment of ZAP70. In turn ZAP70 phosphorylates LAT, which recruits numerous signaling molecules to form the LAT signalosome. The LAT signalosome propagates signal branching to three major signaling pathways, the calcium, the mitogen-activated protein kinase (MAPK) kinase and the nuclear factor NF-kappa-B (NF-kB) pathways, leading to the mobilization of transcription factors that are critical for gene expression and essential for T cell growth and differentiation (PubMed:23524462). The T cell repertoire is generated in the thymus, by V-(D)-J rearrangement. This repertoire is then shaped by intrathymic selection events to generate a peripheral T cell pool of self-MH restricted, non-autoaggressive T cells. Post-thymic interaction of alpha-beta TR with the pMH complexes shapes TR structural and functional avidity (PubMed:15040585).</text>
</comment>
<comment type="subunit">
    <text evidence="5">Alpha-beta TR is a heterodimer composed of an alpha and beta chain; disulfide-linked. The alpha-beta TR is associated with the transmembrane signaling CD3 coreceptor proteins to form the TR-CD3 (TcR or TCR). The assembly of alpha-beta TR heterodimers with CD3 occurs in the endoplasmic reticulum where a single alpha-beta TR heterodimer associates with one CD3D-CD3E heterodimer, one CD3G-CD3E heterodimer and one CD247 homodimer forming a stable octameric structure. CD3D-CD3E and CD3G-CD3E heterodimers preferentially associate with TR alpha and TR beta chains, respectively. The association of the CD247 homodimer is the last step of TcR assembly in the endoplasmic reticulum and is required for transport to the cell surface.</text>
</comment>
<comment type="subcellular location">
    <subcellularLocation>
        <location evidence="5">Cell membrane</location>
    </subcellularLocation>
</comment>
<comment type="polymorphism">
    <text evidence="11">There are several alleles. The sequence shown is that of IMGT allele TRBV5-1*01.</text>
</comment>
<gene>
    <name evidence="10" type="primary">TRBV5-1</name>
    <name evidence="9" type="synonym">TCRBV5S1A1T</name>
</gene>
<evidence type="ECO:0000255" key="1"/>
<evidence type="ECO:0000255" key="2">
    <source>
        <dbReference type="PROSITE-ProRule" id="PRU00114"/>
    </source>
</evidence>
<evidence type="ECO:0000269" key="3">
    <source>
    </source>
</evidence>
<evidence type="ECO:0000303" key="4">
    <source>
    </source>
</evidence>
<evidence type="ECO:0000303" key="5">
    <source>
    </source>
</evidence>
<evidence type="ECO:0000303" key="6">
    <source>
    </source>
</evidence>
<evidence type="ECO:0000303" key="7">
    <source>
    </source>
</evidence>
<evidence type="ECO:0000303" key="8">
    <source>
    </source>
</evidence>
<evidence type="ECO:0000303" key="9">
    <source>
    </source>
</evidence>
<evidence type="ECO:0000303" key="10">
    <source ref="3"/>
</evidence>
<evidence type="ECO:0000305" key="11"/>
<evidence type="ECO:0007744" key="12">
    <source>
        <dbReference type="PDB" id="5BRZ"/>
    </source>
</evidence>
<evidence type="ECO:0007744" key="13">
    <source>
        <dbReference type="PDB" id="5BS0"/>
    </source>
</evidence>
<evidence type="ECO:0007829" key="14">
    <source>
        <dbReference type="PDB" id="5BRZ"/>
    </source>
</evidence>
<evidence type="ECO:0007829" key="15">
    <source>
        <dbReference type="PDB" id="5BS0"/>
    </source>
</evidence>
<protein>
    <recommendedName>
        <fullName evidence="10">T cell receptor beta variable 5-1</fullName>
    </recommendedName>
</protein>
<proteinExistence type="evidence at protein level"/>